<keyword id="KW-0378">Hydrolase</keyword>
<keyword id="KW-1185">Reference proteome</keyword>
<gene>
    <name type="primary">nit</name>
    <name type="ORF">TRAVEDRAFT_139011</name>
</gene>
<name>NIT_TRAVS</name>
<proteinExistence type="evidence at protein level"/>
<protein>
    <recommendedName>
        <fullName evidence="3">Arylacetonitrilase</fullName>
        <ecNumber evidence="2">3.5.5.1</ecNumber>
    </recommendedName>
    <alternativeName>
        <fullName evidence="3">NitTv1</fullName>
    </alternativeName>
</protein>
<sequence length="320" mass="34911">MANTIKASVVQASTAAYSLPDTLDKLEKLTRLAKERDGAQLAVFPEAFIGGYPKMSTFGLVVGDRQPEGRDEFVRYAKAAIEIPSPAITRIEQISRETNVFIVVGVIERDAGTLYCTAVFVDPEKGYVDKHRKLVPTAMERVIWGQGDGSTLPVLDKSFESASAPGSTVNTKLSATICWENYMPLLRTYYYSQGTQIYCAPTVDARPAWQHTMTHIALEGRCFVLSACQFAQEKDYPPDHAVANASARDPNNVMIAGGSVIISPLGKVLAGPLLDAEGVISAELDLDDVLRGKFDLDVTGHYARNDVFEFKLREPPATSS</sequence>
<accession>P9WEU6</accession>
<comment type="function">
    <text evidence="2">Nitrilase that hydrolyzes preferentially fumaronitrile, while 3-phenylpropionitrile, beta-cyano-L-alanine and 4-cyanopyridine are transformed at much lower rates.</text>
</comment>
<comment type="catalytic activity">
    <reaction evidence="2">
        <text>a nitrile + 2 H2O = a carboxylate + NH4(+)</text>
        <dbReference type="Rhea" id="RHEA:21724"/>
        <dbReference type="ChEBI" id="CHEBI:15377"/>
        <dbReference type="ChEBI" id="CHEBI:18379"/>
        <dbReference type="ChEBI" id="CHEBI:28938"/>
        <dbReference type="ChEBI" id="CHEBI:29067"/>
        <dbReference type="EC" id="3.5.5.1"/>
    </reaction>
</comment>
<comment type="similarity">
    <text evidence="4">Belongs to the carbon-nitrogen hydrolase superfamily. Nitrilase family.</text>
</comment>
<feature type="chain" id="PRO_0000451139" description="Arylacetonitrilase">
    <location>
        <begin position="1"/>
        <end position="320"/>
    </location>
</feature>
<feature type="domain" description="CN hydrolase" evidence="1">
    <location>
        <begin position="5"/>
        <end position="286"/>
    </location>
</feature>
<feature type="active site" description="Proton acceptor" evidence="1">
    <location>
        <position position="46"/>
    </location>
</feature>
<feature type="active site" evidence="1">
    <location>
        <position position="133"/>
    </location>
</feature>
<feature type="active site" description="Nucleophile" evidence="1">
    <location>
        <position position="178"/>
    </location>
</feature>
<dbReference type="EC" id="3.5.5.1" evidence="2"/>
<dbReference type="EMBL" id="JH711783">
    <property type="protein sequence ID" value="EIW64330.1"/>
    <property type="molecule type" value="Genomic_DNA"/>
</dbReference>
<dbReference type="RefSeq" id="XP_008032838.1">
    <property type="nucleotide sequence ID" value="XM_008034647.1"/>
</dbReference>
<dbReference type="SMR" id="P9WEU6"/>
<dbReference type="GeneID" id="19409089"/>
<dbReference type="KEGG" id="tvs:TRAVEDRAFT_139011"/>
<dbReference type="OMA" id="GYPKMST"/>
<dbReference type="OrthoDB" id="10250282at2759"/>
<dbReference type="Proteomes" id="UP000054317">
    <property type="component" value="Unassembled WGS sequence"/>
</dbReference>
<dbReference type="GO" id="GO:0000257">
    <property type="term" value="F:nitrilase activity"/>
    <property type="evidence" value="ECO:0007669"/>
    <property type="project" value="UniProtKB-EC"/>
</dbReference>
<dbReference type="CDD" id="cd07564">
    <property type="entry name" value="nitrilases_CHs"/>
    <property type="match status" value="1"/>
</dbReference>
<dbReference type="Gene3D" id="3.60.110.10">
    <property type="entry name" value="Carbon-nitrogen hydrolase"/>
    <property type="match status" value="1"/>
</dbReference>
<dbReference type="InterPro" id="IPR003010">
    <property type="entry name" value="C-N_Hydrolase"/>
</dbReference>
<dbReference type="InterPro" id="IPR036526">
    <property type="entry name" value="C-N_Hydrolase_sf"/>
</dbReference>
<dbReference type="InterPro" id="IPR044149">
    <property type="entry name" value="Nitrilases_CHs"/>
</dbReference>
<dbReference type="PANTHER" id="PTHR46044:SF1">
    <property type="entry name" value="CN HYDROLASE DOMAIN-CONTAINING PROTEIN"/>
    <property type="match status" value="1"/>
</dbReference>
<dbReference type="PANTHER" id="PTHR46044">
    <property type="entry name" value="NITRILASE"/>
    <property type="match status" value="1"/>
</dbReference>
<dbReference type="Pfam" id="PF00795">
    <property type="entry name" value="CN_hydrolase"/>
    <property type="match status" value="1"/>
</dbReference>
<dbReference type="SUPFAM" id="SSF56317">
    <property type="entry name" value="Carbon-nitrogen hydrolase"/>
    <property type="match status" value="1"/>
</dbReference>
<dbReference type="PROSITE" id="PS50263">
    <property type="entry name" value="CN_HYDROLASE"/>
    <property type="match status" value="1"/>
</dbReference>
<organism>
    <name type="scientific">Trametes versicolor (strain FP-101664)</name>
    <name type="common">White-rot fungus</name>
    <name type="synonym">Coriolus versicolor</name>
    <dbReference type="NCBI Taxonomy" id="717944"/>
    <lineage>
        <taxon>Eukaryota</taxon>
        <taxon>Fungi</taxon>
        <taxon>Dikarya</taxon>
        <taxon>Basidiomycota</taxon>
        <taxon>Agaricomycotina</taxon>
        <taxon>Agaricomycetes</taxon>
        <taxon>Polyporales</taxon>
        <taxon>Polyporaceae</taxon>
        <taxon>Trametes</taxon>
    </lineage>
</organism>
<reference key="1">
    <citation type="journal article" date="2012" name="Science">
        <title>The Paleozoic origin of enzymatic lignin decomposition reconstructed from 31 fungal genomes.</title>
        <authorList>
            <person name="Floudas D."/>
            <person name="Binder M."/>
            <person name="Riley R."/>
            <person name="Barry K."/>
            <person name="Blanchette R.A."/>
            <person name="Henrissat B."/>
            <person name="Martinez A.T."/>
            <person name="Otillar R."/>
            <person name="Spatafora J.W."/>
            <person name="Yadav J.S."/>
            <person name="Aerts A."/>
            <person name="Benoit I."/>
            <person name="Boyd A."/>
            <person name="Carlson A."/>
            <person name="Copeland A."/>
            <person name="Coutinho P.M."/>
            <person name="de Vries R.P."/>
            <person name="Ferreira P."/>
            <person name="Findley K."/>
            <person name="Foster B."/>
            <person name="Gaskell J."/>
            <person name="Glotzer D."/>
            <person name="Gorecki P."/>
            <person name="Heitman J."/>
            <person name="Hesse C."/>
            <person name="Hori C."/>
            <person name="Igarashi K."/>
            <person name="Jurgens J.A."/>
            <person name="Kallen N."/>
            <person name="Kersten P."/>
            <person name="Kohler A."/>
            <person name="Kuees U."/>
            <person name="Kumar T.K.A."/>
            <person name="Kuo A."/>
            <person name="LaButti K."/>
            <person name="Larrondo L.F."/>
            <person name="Lindquist E."/>
            <person name="Ling A."/>
            <person name="Lombard V."/>
            <person name="Lucas S."/>
            <person name="Lundell T."/>
            <person name="Martin R."/>
            <person name="McLaughlin D.J."/>
            <person name="Morgenstern I."/>
            <person name="Morin E."/>
            <person name="Murat C."/>
            <person name="Nagy L.G."/>
            <person name="Nolan M."/>
            <person name="Ohm R.A."/>
            <person name="Patyshakuliyeva A."/>
            <person name="Rokas A."/>
            <person name="Ruiz-Duenas F.J."/>
            <person name="Sabat G."/>
            <person name="Salamov A."/>
            <person name="Samejima M."/>
            <person name="Schmutz J."/>
            <person name="Slot J.C."/>
            <person name="St John F."/>
            <person name="Stenlid J."/>
            <person name="Sun H."/>
            <person name="Sun S."/>
            <person name="Syed K."/>
            <person name="Tsang A."/>
            <person name="Wiebenga A."/>
            <person name="Young D."/>
            <person name="Pisabarro A."/>
            <person name="Eastwood D.C."/>
            <person name="Martin F."/>
            <person name="Cullen D."/>
            <person name="Grigoriev I.V."/>
            <person name="Hibbett D.S."/>
        </authorList>
    </citation>
    <scope>NUCLEOTIDE SEQUENCE [LARGE SCALE GENOMIC DNA]</scope>
    <source>
        <strain>FP-101664</strain>
    </source>
</reference>
<reference key="2">
    <citation type="journal article" date="2019" name="Int. J. Mol. Sci.">
        <title>Genetic and functional diversity of nitrilases in Agaricomycotina.</title>
        <authorList>
            <person name="Rucka L."/>
            <person name="Chmatal M."/>
            <person name="Kulik N."/>
            <person name="Petraskova L."/>
            <person name="Pelantova H."/>
            <person name="Novotny P."/>
            <person name="Prihodova R."/>
            <person name="Patek M."/>
            <person name="Martinkova L."/>
        </authorList>
    </citation>
    <scope>FUNCTION</scope>
    <scope>CATALYTIC ACTIVITY</scope>
</reference>
<evidence type="ECO:0000255" key="1">
    <source>
        <dbReference type="PROSITE-ProRule" id="PRU00054"/>
    </source>
</evidence>
<evidence type="ECO:0000269" key="2">
    <source>
    </source>
</evidence>
<evidence type="ECO:0000303" key="3">
    <source>
    </source>
</evidence>
<evidence type="ECO:0000305" key="4"/>